<feature type="chain" id="PRO_1000148774" description="UPF0435 protein BCA_0487">
    <location>
        <begin position="1"/>
        <end position="74"/>
    </location>
</feature>
<evidence type="ECO:0000255" key="1">
    <source>
        <dbReference type="HAMAP-Rule" id="MF_00829"/>
    </source>
</evidence>
<reference key="1">
    <citation type="submission" date="2009-02" db="EMBL/GenBank/DDBJ databases">
        <title>Genome sequence of Bacillus cereus 03BB102.</title>
        <authorList>
            <person name="Dodson R.J."/>
            <person name="Jackson P."/>
            <person name="Munk A.C."/>
            <person name="Brettin T."/>
            <person name="Bruce D."/>
            <person name="Detter C."/>
            <person name="Tapia R."/>
            <person name="Han C."/>
            <person name="Sutton G."/>
            <person name="Sims D."/>
        </authorList>
    </citation>
    <scope>NUCLEOTIDE SEQUENCE [LARGE SCALE GENOMIC DNA]</scope>
    <source>
        <strain>03BB102</strain>
    </source>
</reference>
<organism>
    <name type="scientific">Bacillus cereus (strain 03BB102)</name>
    <dbReference type="NCBI Taxonomy" id="572264"/>
    <lineage>
        <taxon>Bacteria</taxon>
        <taxon>Bacillati</taxon>
        <taxon>Bacillota</taxon>
        <taxon>Bacilli</taxon>
        <taxon>Bacillales</taxon>
        <taxon>Bacillaceae</taxon>
        <taxon>Bacillus</taxon>
        <taxon>Bacillus cereus group</taxon>
    </lineage>
</organism>
<accession>C1EWA3</accession>
<proteinExistence type="inferred from homology"/>
<gene>
    <name type="ordered locus">BCA_0487</name>
</gene>
<comment type="similarity">
    <text evidence="1">Belongs to the UPF0435 family.</text>
</comment>
<dbReference type="EMBL" id="CP001407">
    <property type="protein sequence ID" value="ACO28742.1"/>
    <property type="molecule type" value="Genomic_DNA"/>
</dbReference>
<dbReference type="RefSeq" id="WP_000366197.1">
    <property type="nucleotide sequence ID" value="NZ_CP009318.1"/>
</dbReference>
<dbReference type="SMR" id="C1EWA3"/>
<dbReference type="KEGG" id="bcx:BCA_0487"/>
<dbReference type="PATRIC" id="fig|572264.18.peg.472"/>
<dbReference type="Proteomes" id="UP000002210">
    <property type="component" value="Chromosome"/>
</dbReference>
<dbReference type="HAMAP" id="MF_00829">
    <property type="entry name" value="UPF0435"/>
    <property type="match status" value="1"/>
</dbReference>
<dbReference type="InterPro" id="IPR009507">
    <property type="entry name" value="UPF0435"/>
</dbReference>
<dbReference type="Pfam" id="PF06569">
    <property type="entry name" value="DUF1128"/>
    <property type="match status" value="1"/>
</dbReference>
<sequence length="74" mass="8652">MDLSVKSEENVEYMVEAIKEKLRMVNAGAMRAASFNEEMYEDLRDIYEHVMKRETFSISEMQAITEELGTLIKK</sequence>
<protein>
    <recommendedName>
        <fullName evidence="1">UPF0435 protein BCA_0487</fullName>
    </recommendedName>
</protein>
<name>Y487_BACC3</name>